<reference key="1">
    <citation type="journal article" date="2005" name="Science">
        <title>The genome of the basidiomycetous yeast and human pathogen Cryptococcus neoformans.</title>
        <authorList>
            <person name="Loftus B.J."/>
            <person name="Fung E."/>
            <person name="Roncaglia P."/>
            <person name="Rowley D."/>
            <person name="Amedeo P."/>
            <person name="Bruno D."/>
            <person name="Vamathevan J."/>
            <person name="Miranda M."/>
            <person name="Anderson I.J."/>
            <person name="Fraser J.A."/>
            <person name="Allen J.E."/>
            <person name="Bosdet I.E."/>
            <person name="Brent M.R."/>
            <person name="Chiu R."/>
            <person name="Doering T.L."/>
            <person name="Donlin M.J."/>
            <person name="D'Souza C.A."/>
            <person name="Fox D.S."/>
            <person name="Grinberg V."/>
            <person name="Fu J."/>
            <person name="Fukushima M."/>
            <person name="Haas B.J."/>
            <person name="Huang J.C."/>
            <person name="Janbon G."/>
            <person name="Jones S.J.M."/>
            <person name="Koo H.L."/>
            <person name="Krzywinski M.I."/>
            <person name="Kwon-Chung K.J."/>
            <person name="Lengeler K.B."/>
            <person name="Maiti R."/>
            <person name="Marra M.A."/>
            <person name="Marra R.E."/>
            <person name="Mathewson C.A."/>
            <person name="Mitchell T.G."/>
            <person name="Pertea M."/>
            <person name="Riggs F.R."/>
            <person name="Salzberg S.L."/>
            <person name="Schein J.E."/>
            <person name="Shvartsbeyn A."/>
            <person name="Shin H."/>
            <person name="Shumway M."/>
            <person name="Specht C.A."/>
            <person name="Suh B.B."/>
            <person name="Tenney A."/>
            <person name="Utterback T.R."/>
            <person name="Wickes B.L."/>
            <person name="Wortman J.R."/>
            <person name="Wye N.H."/>
            <person name="Kronstad J.W."/>
            <person name="Lodge J.K."/>
            <person name="Heitman J."/>
            <person name="Davis R.W."/>
            <person name="Fraser C.M."/>
            <person name="Hyman R.W."/>
        </authorList>
    </citation>
    <scope>NUCLEOTIDE SEQUENCE [LARGE SCALE GENOMIC DNA]</scope>
    <source>
        <strain>B-3501A</strain>
    </source>
</reference>
<protein>
    <recommendedName>
        <fullName>Autophagy-related protein 2</fullName>
    </recommendedName>
</protein>
<dbReference type="EMBL" id="AAEY01000011">
    <property type="protein sequence ID" value="EAL22325.1"/>
    <property type="molecule type" value="Genomic_DNA"/>
</dbReference>
<dbReference type="RefSeq" id="XP_776972.1">
    <property type="nucleotide sequence ID" value="XM_771879.1"/>
</dbReference>
<dbReference type="SMR" id="P0CM31"/>
<dbReference type="GeneID" id="4934595"/>
<dbReference type="KEGG" id="cnb:CNBB5000"/>
<dbReference type="VEuPathDB" id="FungiDB:CNBB5000"/>
<dbReference type="HOGENOM" id="CLU_000795_0_0_1"/>
<dbReference type="OrthoDB" id="6982at5206"/>
<dbReference type="GO" id="GO:0005789">
    <property type="term" value="C:endoplasmic reticulum membrane"/>
    <property type="evidence" value="ECO:0007669"/>
    <property type="project" value="UniProtKB-SubCell"/>
</dbReference>
<dbReference type="GO" id="GO:0061908">
    <property type="term" value="C:phagophore"/>
    <property type="evidence" value="ECO:0007669"/>
    <property type="project" value="TreeGrafter"/>
</dbReference>
<dbReference type="GO" id="GO:0034045">
    <property type="term" value="C:phagophore assembly site membrane"/>
    <property type="evidence" value="ECO:0007669"/>
    <property type="project" value="UniProtKB-SubCell"/>
</dbReference>
<dbReference type="GO" id="GO:0032266">
    <property type="term" value="F:phosphatidylinositol-3-phosphate binding"/>
    <property type="evidence" value="ECO:0007669"/>
    <property type="project" value="TreeGrafter"/>
</dbReference>
<dbReference type="GO" id="GO:0043495">
    <property type="term" value="F:protein-membrane adaptor activity"/>
    <property type="evidence" value="ECO:0007669"/>
    <property type="project" value="TreeGrafter"/>
</dbReference>
<dbReference type="GO" id="GO:0000045">
    <property type="term" value="P:autophagosome assembly"/>
    <property type="evidence" value="ECO:0007669"/>
    <property type="project" value="TreeGrafter"/>
</dbReference>
<dbReference type="GO" id="GO:0000422">
    <property type="term" value="P:autophagy of mitochondrion"/>
    <property type="evidence" value="ECO:0007669"/>
    <property type="project" value="TreeGrafter"/>
</dbReference>
<dbReference type="GO" id="GO:0061723">
    <property type="term" value="P:glycophagy"/>
    <property type="evidence" value="ECO:0007669"/>
    <property type="project" value="TreeGrafter"/>
</dbReference>
<dbReference type="GO" id="GO:0006869">
    <property type="term" value="P:lipid transport"/>
    <property type="evidence" value="ECO:0007669"/>
    <property type="project" value="UniProtKB-KW"/>
</dbReference>
<dbReference type="GO" id="GO:0034727">
    <property type="term" value="P:piecemeal microautophagy of the nucleus"/>
    <property type="evidence" value="ECO:0007669"/>
    <property type="project" value="TreeGrafter"/>
</dbReference>
<dbReference type="GO" id="GO:0015031">
    <property type="term" value="P:protein transport"/>
    <property type="evidence" value="ECO:0007669"/>
    <property type="project" value="UniProtKB-KW"/>
</dbReference>
<dbReference type="GO" id="GO:0061709">
    <property type="term" value="P:reticulophagy"/>
    <property type="evidence" value="ECO:0007669"/>
    <property type="project" value="TreeGrafter"/>
</dbReference>
<dbReference type="InterPro" id="IPR026849">
    <property type="entry name" value="ATG2"/>
</dbReference>
<dbReference type="PANTHER" id="PTHR13190">
    <property type="entry name" value="AUTOPHAGY-RELATED 2, ISOFORM A"/>
    <property type="match status" value="1"/>
</dbReference>
<dbReference type="PANTHER" id="PTHR13190:SF1">
    <property type="entry name" value="AUTOPHAGY-RELATED 2, ISOFORM A"/>
    <property type="match status" value="1"/>
</dbReference>
<dbReference type="Pfam" id="PF13329">
    <property type="entry name" value="ATG2_CAD"/>
    <property type="match status" value="1"/>
</dbReference>
<name>ATG2_CRYNB</name>
<comment type="function">
    <text evidence="2">Lipid transfer protein required for autophagosome completion and peroxisome degradation. Tethers the edge of the isolation membrane (IM) to the endoplasmic reticulum (ER) and mediates direct lipid transfer from ER to IM for IM expansion. ATG2 binds to the ER exit site (ERES), which is the membrane source for autophagosome formation, using basic residues in its N-terminal region (NR) and to the expanding edge of the IM through its C-terminal region. The latter binding is assisted by an ATG18-PtdIns3P interaction. ATG2 then extracts phospholipids from the membrane source using its NR and transfers them to ATG9 to the IM through its predicted beta-sheet-rich structure for membrane expansion.</text>
</comment>
<comment type="catalytic activity">
    <reaction evidence="1">
        <text>a 1,2-diacyl-sn-glycero-3-phosphocholine(in) = a 1,2-diacyl-sn-glycero-3-phosphocholine(out)</text>
        <dbReference type="Rhea" id="RHEA:38571"/>
        <dbReference type="ChEBI" id="CHEBI:57643"/>
    </reaction>
</comment>
<comment type="catalytic activity">
    <reaction evidence="1">
        <text>a 1,2-diacyl-sn-glycero-3-phospho-L-serine(in) = a 1,2-diacyl-sn-glycero-3-phospho-L-serine(out)</text>
        <dbReference type="Rhea" id="RHEA:38663"/>
        <dbReference type="ChEBI" id="CHEBI:57262"/>
    </reaction>
</comment>
<comment type="catalytic activity">
    <reaction evidence="1">
        <text>a 1,2-diacyl-sn-glycero-3-phosphoethanolamine(in) = a 1,2-diacyl-sn-glycero-3-phosphoethanolamine(out)</text>
        <dbReference type="Rhea" id="RHEA:38895"/>
        <dbReference type="ChEBI" id="CHEBI:64612"/>
    </reaction>
</comment>
<comment type="subcellular location">
    <subcellularLocation>
        <location evidence="2">Preautophagosomal structure membrane</location>
        <topology evidence="2">Peripheral membrane protein</topology>
    </subcellularLocation>
    <subcellularLocation>
        <location evidence="2">Endoplasmic reticulum membrane</location>
        <topology evidence="2">Peripheral membrane protein</topology>
    </subcellularLocation>
</comment>
<comment type="similarity">
    <text evidence="5">Belongs to the ATG2 family.</text>
</comment>
<proteinExistence type="inferred from homology"/>
<keyword id="KW-0072">Autophagy</keyword>
<keyword id="KW-0256">Endoplasmic reticulum</keyword>
<keyword id="KW-0445">Lipid transport</keyword>
<keyword id="KW-0472">Membrane</keyword>
<keyword id="KW-0653">Protein transport</keyword>
<keyword id="KW-0813">Transport</keyword>
<accession>P0CM31</accession>
<accession>Q55X62</accession>
<accession>Q5KMS0</accession>
<gene>
    <name type="primary">ATG2</name>
    <name type="ordered locus">CNBB5000</name>
</gene>
<sequence>MFSLPSFLTTFSFTLPSLPSISLPANIQRRFLSYVLKRTLGRFVSHQALDAERIQAQVSEGWVEIENLEIECSEINNYIPPPLPLSLTSGTINKLTAKLPFPNLWSDPLQVSLDTLTLDFTLSSPSPLSRGRAATRPEHHDLAESVTSAADDFLHHELDAYEEKELEGSIRQSLILSQTDPFISDVPGGFPLGSPGEISPGRPLPANMESTTVLAGMVERILARLEFRVEKIKIRLVIEDEEDVVELTVGRIRYADESEAQTNDDGKSTTRAIRISNISLDIVPSQRKPPSLVIPQRQSLEPSVSSSTSTASTSSGNDYSDMFMSQAVVDLRQSLLTPEQISEPANEQTVHESNMFYSALSQPNESEPGASTGIKRSGISQNPKLADEIEEERSRSETPTPETKPQPSGIPVLSFGQEDVVLHMRTTRPLISAGHQTSFNDNKPTVEMNITIGTITTVLLPSHLKLFISALQTLQALCQKDDVPAAKDKPAQSTSPQTRLTATTKLKAFYVSLVYDLSAETSLNLHSTMASHLTRPTNPIPYPHLRFRLDTLVASYQSPGHSNPSRPAFTRPTPNMSTANLRRKSSGHARFGSLPSNLTVNVGDISLFEWMGEGMIAPVILFDPGLKHQYDLPSAPPHKGQAGFPECECRDWREEKKTGSEKAWRVRPRGRGILKGGARATTEDEGPVVHVRQDLGSDSAAVINLQSLHVFVDLSLIERLLPLLRSVTPLIHPPEPTPAWLQSVPSQSISEEITPESIISSLSAPPPTARGKKMKADIRCDLVRLSVRCPAPPPEPAERQIGDGRQLRSGIVFVDVHGLKSRFMDTSRTGTRPASSEVANVEFEQTLIFFASVSQHYAYPFLIFAPLSPEPGEEDIPLLPSISLSSFPQASSLPASSIAKTTLVTCKMPAIRASVHHPTVTGLQYFADDVTRWLDVAFADGSAKPRDELKMIGSRFFGGSKGSEASSEIDEPYDVEEVAAGMKVEIEISEIDMGLYVPRLDASGERVFSFKANDLGVRMETHPEENETALELSIMDLDFSDVSSTPLRILGRTTPFTLTSHQAPVVYLRFVSSTDLRTTLKESNISVALSHFTFAVHKEIAWLHEIAQFAKPPKGVFENLSPTDLTRLSINLSSASFLLVPPNLPGSIVILVREVEGKTEIPKGATDSVLEVGMSGLGALAVEGESGPLEVSSDLADVWKKAGYAQLAEVMVLELRLMRELVAAGEVSLDITQAQFKVTACADSLATFAEIATDFGHSLDENAFNLLPEIVSHSDTDMIEDDLPHNLDYLDHATRISKHYPSMDRTTGENLRAWHTPEEGLEEGEWENGESGETIRAFGGEIEEEEGYWEGLPILNDVYSADQKPGKIHIRVLDASLKIFLHDGYDWPRTRKAIEDEVRAVRRRLERIRQLLASGQKADESIENATSSVLFNSIYIGLEQKGEMGLSTMGMGKMDEKALMAAIDEELDGMETESGSSWQTLPAGVGAGPSAVHQAHKKTRLKGKRLVRSKKAQIEITLSGIKTDVDLYPTEESTSSRVHFTAKEMEILDHIKTSTWKKFLTEMKADNRGNIRETDADMLRIELVGVRLKEDEEELRLRAKILPLRLHVDQDALDFLKRFFSFKAPPMTSARPLAQHTTSSTPDLYFQHVEIFPIQLKLDYKPKRVDFRALREGKTIELMNFFHFEGAEMTLRHITLSGITGLERLGTTLQDLWTPDVKANQLADVISGVSPIRSMVNVGSGVADLILLPIEQYRKDGRIAKGVQRGTNSFVKSTALEVMKLGARLATGTQVILERAEGVLGGKSGEDVVGQVQGLSTNAFGVDSGMLEGGSSSEDEQEAISRYADQPESMKEGVQAAYKSLSKNVNAAAQTILAVPMEVYERSGDDGPLKAVIRAVPIAVLKPMIGTTEAVSKTLLGMRNSLDPSARRELDDKYK</sequence>
<feature type="chain" id="PRO_0000410017" description="Autophagy-related protein 2">
    <location>
        <begin position="1"/>
        <end position="1935"/>
    </location>
</feature>
<feature type="domain" description="Chorein N-terminal" evidence="3">
    <location>
        <begin position="30"/>
        <end position="121"/>
    </location>
</feature>
<feature type="region of interest" description="Disordered" evidence="4">
    <location>
        <begin position="286"/>
        <end position="319"/>
    </location>
</feature>
<feature type="region of interest" description="Disordered" evidence="4">
    <location>
        <begin position="360"/>
        <end position="412"/>
    </location>
</feature>
<feature type="compositionally biased region" description="Low complexity" evidence="4">
    <location>
        <begin position="303"/>
        <end position="315"/>
    </location>
</feature>
<feature type="compositionally biased region" description="Polar residues" evidence="4">
    <location>
        <begin position="397"/>
        <end position="406"/>
    </location>
</feature>
<evidence type="ECO:0000250" key="1">
    <source>
        <dbReference type="UniProtKB" id="O94649"/>
    </source>
</evidence>
<evidence type="ECO:0000250" key="2">
    <source>
        <dbReference type="UniProtKB" id="P53855"/>
    </source>
</evidence>
<evidence type="ECO:0000255" key="3"/>
<evidence type="ECO:0000256" key="4">
    <source>
        <dbReference type="SAM" id="MobiDB-lite"/>
    </source>
</evidence>
<evidence type="ECO:0000305" key="5"/>
<organism>
    <name type="scientific">Cryptococcus neoformans var. neoformans serotype D (strain B-3501A)</name>
    <name type="common">Filobasidiella neoformans</name>
    <dbReference type="NCBI Taxonomy" id="283643"/>
    <lineage>
        <taxon>Eukaryota</taxon>
        <taxon>Fungi</taxon>
        <taxon>Dikarya</taxon>
        <taxon>Basidiomycota</taxon>
        <taxon>Agaricomycotina</taxon>
        <taxon>Tremellomycetes</taxon>
        <taxon>Tremellales</taxon>
        <taxon>Cryptococcaceae</taxon>
        <taxon>Cryptococcus</taxon>
        <taxon>Cryptococcus neoformans species complex</taxon>
    </lineage>
</organism>